<evidence type="ECO:0000250" key="1"/>
<evidence type="ECO:0000250" key="2">
    <source>
        <dbReference type="UniProtKB" id="O60244"/>
    </source>
</evidence>
<evidence type="ECO:0000256" key="3">
    <source>
        <dbReference type="SAM" id="MobiDB-lite"/>
    </source>
</evidence>
<evidence type="ECO:0000269" key="4">
    <source>
    </source>
</evidence>
<evidence type="ECO:0000303" key="5">
    <source>
    </source>
</evidence>
<evidence type="ECO:0000303" key="6">
    <source>
    </source>
</evidence>
<evidence type="ECO:0000303" key="7">
    <source>
    </source>
</evidence>
<evidence type="ECO:0000305" key="8"/>
<evidence type="ECO:0007744" key="9">
    <source>
    </source>
</evidence>
<gene>
    <name type="primary">Med14</name>
    <name type="synonym">Crsp2</name>
    <name type="synonym">Gm641</name>
    <name type="synonym">Trap170</name>
</gene>
<accession>A2ABV5</accession>
<accession>Q3TQU3</accession>
<accession>Q6P1H5</accession>
<accession>Q9R0T1</accession>
<accession>Q9WTN9</accession>
<dbReference type="EMBL" id="AB019028">
    <property type="protein sequence ID" value="BAA76610.1"/>
    <property type="molecule type" value="mRNA"/>
</dbReference>
<dbReference type="EMBL" id="AB019029">
    <property type="protein sequence ID" value="BAA76611.1"/>
    <property type="molecule type" value="Genomic_DNA"/>
</dbReference>
<dbReference type="EMBL" id="AK163306">
    <property type="protein sequence ID" value="BAE37289.1"/>
    <property type="molecule type" value="mRNA"/>
</dbReference>
<dbReference type="EMBL" id="AL662925">
    <property type="status" value="NOT_ANNOTATED_CDS"/>
    <property type="molecule type" value="Genomic_DNA"/>
</dbReference>
<dbReference type="EMBL" id="BX000537">
    <property type="status" value="NOT_ANNOTATED_CDS"/>
    <property type="molecule type" value="Genomic_DNA"/>
</dbReference>
<dbReference type="EMBL" id="BC065072">
    <property type="protein sequence ID" value="AAH65072.1"/>
    <property type="molecule type" value="mRNA"/>
</dbReference>
<dbReference type="CCDS" id="CCDS40874.1">
    <molecule id="A2ABV5-1"/>
</dbReference>
<dbReference type="RefSeq" id="NP_001041673.1">
    <molecule id="A2ABV5-1"/>
    <property type="nucleotide sequence ID" value="NM_001048208.1"/>
</dbReference>
<dbReference type="RefSeq" id="NP_036135.3">
    <property type="nucleotide sequence ID" value="NM_012005.3"/>
</dbReference>
<dbReference type="PDB" id="6W1S">
    <property type="method" value="EM"/>
    <property type="resolution" value="4.02 A"/>
    <property type="chains" value="I=1-1459"/>
</dbReference>
<dbReference type="PDB" id="8T1I">
    <property type="method" value="EM"/>
    <property type="resolution" value="4.68 A"/>
    <property type="chains" value="I=1-1459"/>
</dbReference>
<dbReference type="PDB" id="8T1L">
    <property type="method" value="EM"/>
    <property type="resolution" value="4.83 A"/>
    <property type="chains" value="I=1-1459"/>
</dbReference>
<dbReference type="PDBsum" id="6W1S"/>
<dbReference type="PDBsum" id="8T1I"/>
<dbReference type="PDBsum" id="8T1L"/>
<dbReference type="EMDB" id="EMD-20392"/>
<dbReference type="EMDB" id="EMD-21514"/>
<dbReference type="EMDB" id="EMD-40968"/>
<dbReference type="EMDB" id="EMD-40971"/>
<dbReference type="SMR" id="A2ABV5"/>
<dbReference type="BioGRID" id="205047">
    <property type="interactions" value="6"/>
</dbReference>
<dbReference type="ComplexPortal" id="CPX-3264">
    <property type="entry name" value="Core mediator complex"/>
</dbReference>
<dbReference type="CORUM" id="A2ABV5"/>
<dbReference type="FunCoup" id="A2ABV5">
    <property type="interactions" value="5406"/>
</dbReference>
<dbReference type="IntAct" id="A2ABV5">
    <property type="interactions" value="4"/>
</dbReference>
<dbReference type="MINT" id="A2ABV5"/>
<dbReference type="STRING" id="10090.ENSMUSP00000094239"/>
<dbReference type="GlyGen" id="A2ABV5">
    <property type="glycosylation" value="2 sites"/>
</dbReference>
<dbReference type="iPTMnet" id="A2ABV5"/>
<dbReference type="PhosphoSitePlus" id="A2ABV5"/>
<dbReference type="jPOST" id="A2ABV5"/>
<dbReference type="PaxDb" id="10090-ENSMUSP00000094239"/>
<dbReference type="PeptideAtlas" id="A2ABV5"/>
<dbReference type="ProteomicsDB" id="292179">
    <molecule id="A2ABV5-1"/>
</dbReference>
<dbReference type="ProteomicsDB" id="292180">
    <molecule id="A2ABV5-2"/>
</dbReference>
<dbReference type="ProteomicsDB" id="292181">
    <molecule id="A2ABV5-3"/>
</dbReference>
<dbReference type="ProteomicsDB" id="292182">
    <molecule id="A2ABV5-4"/>
</dbReference>
<dbReference type="Pumba" id="A2ABV5"/>
<dbReference type="Antibodypedia" id="10773">
    <property type="antibodies" value="155 antibodies from 30 providers"/>
</dbReference>
<dbReference type="DNASU" id="26896"/>
<dbReference type="Ensembl" id="ENSMUST00000096495.11">
    <molecule id="A2ABV5-1"/>
    <property type="protein sequence ID" value="ENSMUSP00000094239.5"/>
    <property type="gene ID" value="ENSMUSG00000064127.14"/>
</dbReference>
<dbReference type="GeneID" id="26896"/>
<dbReference type="KEGG" id="mmu:26896"/>
<dbReference type="UCSC" id="uc009sqz.1">
    <molecule id="A2ABV5-1"/>
    <property type="organism name" value="mouse"/>
</dbReference>
<dbReference type="UCSC" id="uc009srd.1">
    <molecule id="A2ABV5-3"/>
    <property type="organism name" value="mouse"/>
</dbReference>
<dbReference type="AGR" id="MGI:1349442"/>
<dbReference type="CTD" id="9282"/>
<dbReference type="MGI" id="MGI:1349442">
    <property type="gene designation" value="Med14"/>
</dbReference>
<dbReference type="VEuPathDB" id="HostDB:ENSMUSG00000064127"/>
<dbReference type="eggNOG" id="KOG1875">
    <property type="taxonomic scope" value="Eukaryota"/>
</dbReference>
<dbReference type="GeneTree" id="ENSGT00390000001021"/>
<dbReference type="HOGENOM" id="CLU_001928_0_0_1"/>
<dbReference type="InParanoid" id="A2ABV5"/>
<dbReference type="OMA" id="KQPAYFI"/>
<dbReference type="OrthoDB" id="205099at2759"/>
<dbReference type="PhylomeDB" id="A2ABV5"/>
<dbReference type="TreeFam" id="TF314388"/>
<dbReference type="BioGRID-ORCS" id="26896">
    <property type="hits" value="31 hits in 76 CRISPR screens"/>
</dbReference>
<dbReference type="ChiTaRS" id="Med14">
    <property type="organism name" value="mouse"/>
</dbReference>
<dbReference type="PRO" id="PR:A2ABV5"/>
<dbReference type="Proteomes" id="UP000000589">
    <property type="component" value="Chromosome X"/>
</dbReference>
<dbReference type="RNAct" id="A2ABV5">
    <property type="molecule type" value="protein"/>
</dbReference>
<dbReference type="Bgee" id="ENSMUSG00000064127">
    <property type="expression patterns" value="Expressed in metanephric cortical collecting duct and 245 other cell types or tissues"/>
</dbReference>
<dbReference type="ExpressionAtlas" id="A2ABV5">
    <property type="expression patterns" value="baseline and differential"/>
</dbReference>
<dbReference type="GO" id="GO:0070847">
    <property type="term" value="C:core mediator complex"/>
    <property type="evidence" value="ECO:0000266"/>
    <property type="project" value="ComplexPortal"/>
</dbReference>
<dbReference type="GO" id="GO:0016592">
    <property type="term" value="C:mediator complex"/>
    <property type="evidence" value="ECO:0000314"/>
    <property type="project" value="MGI"/>
</dbReference>
<dbReference type="GO" id="GO:0005654">
    <property type="term" value="C:nucleoplasm"/>
    <property type="evidence" value="ECO:0000304"/>
    <property type="project" value="Reactome"/>
</dbReference>
<dbReference type="GO" id="GO:0005634">
    <property type="term" value="C:nucleus"/>
    <property type="evidence" value="ECO:0000266"/>
    <property type="project" value="ComplexPortal"/>
</dbReference>
<dbReference type="GO" id="GO:0003713">
    <property type="term" value="F:transcription coactivator activity"/>
    <property type="evidence" value="ECO:0000266"/>
    <property type="project" value="MGI"/>
</dbReference>
<dbReference type="GO" id="GO:0045944">
    <property type="term" value="P:positive regulation of transcription by RNA polymerase II"/>
    <property type="evidence" value="ECO:0000266"/>
    <property type="project" value="MGI"/>
</dbReference>
<dbReference type="GO" id="GO:0032968">
    <property type="term" value="P:positive regulation of transcription elongation by RNA polymerase II"/>
    <property type="evidence" value="ECO:0000303"/>
    <property type="project" value="ComplexPortal"/>
</dbReference>
<dbReference type="GO" id="GO:0060261">
    <property type="term" value="P:positive regulation of transcription initiation by RNA polymerase II"/>
    <property type="evidence" value="ECO:0000303"/>
    <property type="project" value="ComplexPortal"/>
</dbReference>
<dbReference type="GO" id="GO:0051123">
    <property type="term" value="P:RNA polymerase II preinitiation complex assembly"/>
    <property type="evidence" value="ECO:0000303"/>
    <property type="project" value="ComplexPortal"/>
</dbReference>
<dbReference type="GO" id="GO:0035019">
    <property type="term" value="P:somatic stem cell population maintenance"/>
    <property type="evidence" value="ECO:0000315"/>
    <property type="project" value="MGI"/>
</dbReference>
<dbReference type="InterPro" id="IPR056877">
    <property type="entry name" value="Med14_C"/>
</dbReference>
<dbReference type="InterPro" id="IPR055122">
    <property type="entry name" value="Med14_N"/>
</dbReference>
<dbReference type="InterPro" id="IPR055113">
    <property type="entry name" value="Med14_RM2"/>
</dbReference>
<dbReference type="InterPro" id="IPR055114">
    <property type="entry name" value="Med14_RM6"/>
</dbReference>
<dbReference type="InterPro" id="IPR055107">
    <property type="entry name" value="Med14_RM8"/>
</dbReference>
<dbReference type="InterPro" id="IPR013947">
    <property type="entry name" value="Mediator_Med14"/>
</dbReference>
<dbReference type="InterPro" id="IPR056879">
    <property type="entry name" value="RM3_Med14"/>
</dbReference>
<dbReference type="InterPro" id="IPR056878">
    <property type="entry name" value="RM5_Med14"/>
</dbReference>
<dbReference type="PANTHER" id="PTHR12809">
    <property type="entry name" value="MEDIATOR COMPLEX SUBUNIT"/>
    <property type="match status" value="1"/>
</dbReference>
<dbReference type="PANTHER" id="PTHR12809:SF2">
    <property type="entry name" value="MEDIATOR OF RNA POLYMERASE II TRANSCRIPTION SUBUNIT 14"/>
    <property type="match status" value="1"/>
</dbReference>
<dbReference type="Pfam" id="PF08638">
    <property type="entry name" value="Med14"/>
    <property type="match status" value="1"/>
</dbReference>
<dbReference type="Pfam" id="PF25069">
    <property type="entry name" value="Med14_C"/>
    <property type="match status" value="1"/>
</dbReference>
<dbReference type="Pfam" id="PF22981">
    <property type="entry name" value="RM2_Med14"/>
    <property type="match status" value="1"/>
</dbReference>
<dbReference type="Pfam" id="PF25065">
    <property type="entry name" value="RM3_Med14"/>
    <property type="match status" value="1"/>
</dbReference>
<dbReference type="Pfam" id="PF25067">
    <property type="entry name" value="RM5_Med14"/>
    <property type="match status" value="1"/>
</dbReference>
<dbReference type="Pfam" id="PF22984">
    <property type="entry name" value="RM6_Med14"/>
    <property type="match status" value="1"/>
</dbReference>
<dbReference type="Pfam" id="PF22983">
    <property type="entry name" value="RM8_Med14"/>
    <property type="match status" value="1"/>
</dbReference>
<reference key="1">
    <citation type="journal article" date="1999" name="Genomics">
        <title>Detection and cloning of an X-linked locus associated with a NotI site that is not methylated on mouse inactivated X chromosome by the RLGS-M method.</title>
        <authorList>
            <person name="Takada S."/>
            <person name="Kamiya M."/>
            <person name="Arima T."/>
            <person name="Kagebayashi H."/>
            <person name="Shibata H."/>
            <person name="Muramatsu M."/>
            <person name="Chapman V.M."/>
            <person name="Wake N."/>
            <person name="Hayashizaki Y."/>
            <person name="Takagi N."/>
        </authorList>
    </citation>
    <scope>NUCLEOTIDE SEQUENCE [GENOMIC DNA / MRNA] (ISOFORM 3)</scope>
    <source>
        <strain>C57BL/6J</strain>
        <tissue>Kidney</tissue>
    </source>
</reference>
<reference key="2">
    <citation type="journal article" date="2005" name="Science">
        <title>The transcriptional landscape of the mammalian genome.</title>
        <authorList>
            <person name="Carninci P."/>
            <person name="Kasukawa T."/>
            <person name="Katayama S."/>
            <person name="Gough J."/>
            <person name="Frith M.C."/>
            <person name="Maeda N."/>
            <person name="Oyama R."/>
            <person name="Ravasi T."/>
            <person name="Lenhard B."/>
            <person name="Wells C."/>
            <person name="Kodzius R."/>
            <person name="Shimokawa K."/>
            <person name="Bajic V.B."/>
            <person name="Brenner S.E."/>
            <person name="Batalov S."/>
            <person name="Forrest A.R."/>
            <person name="Zavolan M."/>
            <person name="Davis M.J."/>
            <person name="Wilming L.G."/>
            <person name="Aidinis V."/>
            <person name="Allen J.E."/>
            <person name="Ambesi-Impiombato A."/>
            <person name="Apweiler R."/>
            <person name="Aturaliya R.N."/>
            <person name="Bailey T.L."/>
            <person name="Bansal M."/>
            <person name="Baxter L."/>
            <person name="Beisel K.W."/>
            <person name="Bersano T."/>
            <person name="Bono H."/>
            <person name="Chalk A.M."/>
            <person name="Chiu K.P."/>
            <person name="Choudhary V."/>
            <person name="Christoffels A."/>
            <person name="Clutterbuck D.R."/>
            <person name="Crowe M.L."/>
            <person name="Dalla E."/>
            <person name="Dalrymple B.P."/>
            <person name="de Bono B."/>
            <person name="Della Gatta G."/>
            <person name="di Bernardo D."/>
            <person name="Down T."/>
            <person name="Engstrom P."/>
            <person name="Fagiolini M."/>
            <person name="Faulkner G."/>
            <person name="Fletcher C.F."/>
            <person name="Fukushima T."/>
            <person name="Furuno M."/>
            <person name="Futaki S."/>
            <person name="Gariboldi M."/>
            <person name="Georgii-Hemming P."/>
            <person name="Gingeras T.R."/>
            <person name="Gojobori T."/>
            <person name="Green R.E."/>
            <person name="Gustincich S."/>
            <person name="Harbers M."/>
            <person name="Hayashi Y."/>
            <person name="Hensch T.K."/>
            <person name="Hirokawa N."/>
            <person name="Hill D."/>
            <person name="Huminiecki L."/>
            <person name="Iacono M."/>
            <person name="Ikeo K."/>
            <person name="Iwama A."/>
            <person name="Ishikawa T."/>
            <person name="Jakt M."/>
            <person name="Kanapin A."/>
            <person name="Katoh M."/>
            <person name="Kawasawa Y."/>
            <person name="Kelso J."/>
            <person name="Kitamura H."/>
            <person name="Kitano H."/>
            <person name="Kollias G."/>
            <person name="Krishnan S.P."/>
            <person name="Kruger A."/>
            <person name="Kummerfeld S.K."/>
            <person name="Kurochkin I.V."/>
            <person name="Lareau L.F."/>
            <person name="Lazarevic D."/>
            <person name="Lipovich L."/>
            <person name="Liu J."/>
            <person name="Liuni S."/>
            <person name="McWilliam S."/>
            <person name="Madan Babu M."/>
            <person name="Madera M."/>
            <person name="Marchionni L."/>
            <person name="Matsuda H."/>
            <person name="Matsuzawa S."/>
            <person name="Miki H."/>
            <person name="Mignone F."/>
            <person name="Miyake S."/>
            <person name="Morris K."/>
            <person name="Mottagui-Tabar S."/>
            <person name="Mulder N."/>
            <person name="Nakano N."/>
            <person name="Nakauchi H."/>
            <person name="Ng P."/>
            <person name="Nilsson R."/>
            <person name="Nishiguchi S."/>
            <person name="Nishikawa S."/>
            <person name="Nori F."/>
            <person name="Ohara O."/>
            <person name="Okazaki Y."/>
            <person name="Orlando V."/>
            <person name="Pang K.C."/>
            <person name="Pavan W.J."/>
            <person name="Pavesi G."/>
            <person name="Pesole G."/>
            <person name="Petrovsky N."/>
            <person name="Piazza S."/>
            <person name="Reed J."/>
            <person name="Reid J.F."/>
            <person name="Ring B.Z."/>
            <person name="Ringwald M."/>
            <person name="Rost B."/>
            <person name="Ruan Y."/>
            <person name="Salzberg S.L."/>
            <person name="Sandelin A."/>
            <person name="Schneider C."/>
            <person name="Schoenbach C."/>
            <person name="Sekiguchi K."/>
            <person name="Semple C.A."/>
            <person name="Seno S."/>
            <person name="Sessa L."/>
            <person name="Sheng Y."/>
            <person name="Shibata Y."/>
            <person name="Shimada H."/>
            <person name="Shimada K."/>
            <person name="Silva D."/>
            <person name="Sinclair B."/>
            <person name="Sperling S."/>
            <person name="Stupka E."/>
            <person name="Sugiura K."/>
            <person name="Sultana R."/>
            <person name="Takenaka Y."/>
            <person name="Taki K."/>
            <person name="Tammoja K."/>
            <person name="Tan S.L."/>
            <person name="Tang S."/>
            <person name="Taylor M.S."/>
            <person name="Tegner J."/>
            <person name="Teichmann S.A."/>
            <person name="Ueda H.R."/>
            <person name="van Nimwegen E."/>
            <person name="Verardo R."/>
            <person name="Wei C.L."/>
            <person name="Yagi K."/>
            <person name="Yamanishi H."/>
            <person name="Zabarovsky E."/>
            <person name="Zhu S."/>
            <person name="Zimmer A."/>
            <person name="Hide W."/>
            <person name="Bult C."/>
            <person name="Grimmond S.M."/>
            <person name="Teasdale R.D."/>
            <person name="Liu E.T."/>
            <person name="Brusic V."/>
            <person name="Quackenbush J."/>
            <person name="Wahlestedt C."/>
            <person name="Mattick J.S."/>
            <person name="Hume D.A."/>
            <person name="Kai C."/>
            <person name="Sasaki D."/>
            <person name="Tomaru Y."/>
            <person name="Fukuda S."/>
            <person name="Kanamori-Katayama M."/>
            <person name="Suzuki M."/>
            <person name="Aoki J."/>
            <person name="Arakawa T."/>
            <person name="Iida J."/>
            <person name="Imamura K."/>
            <person name="Itoh M."/>
            <person name="Kato T."/>
            <person name="Kawaji H."/>
            <person name="Kawagashira N."/>
            <person name="Kawashima T."/>
            <person name="Kojima M."/>
            <person name="Kondo S."/>
            <person name="Konno H."/>
            <person name="Nakano K."/>
            <person name="Ninomiya N."/>
            <person name="Nishio T."/>
            <person name="Okada M."/>
            <person name="Plessy C."/>
            <person name="Shibata K."/>
            <person name="Shiraki T."/>
            <person name="Suzuki S."/>
            <person name="Tagami M."/>
            <person name="Waki K."/>
            <person name="Watahiki A."/>
            <person name="Okamura-Oho Y."/>
            <person name="Suzuki H."/>
            <person name="Kawai J."/>
            <person name="Hayashizaki Y."/>
        </authorList>
    </citation>
    <scope>NUCLEOTIDE SEQUENCE [LARGE SCALE MRNA] (ISOFORM 4)</scope>
    <source>
        <strain>C57BL/6J</strain>
        <tissue>Egg</tissue>
    </source>
</reference>
<reference key="3">
    <citation type="journal article" date="2009" name="PLoS Biol.">
        <title>Lineage-specific biology revealed by a finished genome assembly of the mouse.</title>
        <authorList>
            <person name="Church D.M."/>
            <person name="Goodstadt L."/>
            <person name="Hillier L.W."/>
            <person name="Zody M.C."/>
            <person name="Goldstein S."/>
            <person name="She X."/>
            <person name="Bult C.J."/>
            <person name="Agarwala R."/>
            <person name="Cherry J.L."/>
            <person name="DiCuccio M."/>
            <person name="Hlavina W."/>
            <person name="Kapustin Y."/>
            <person name="Meric P."/>
            <person name="Maglott D."/>
            <person name="Birtle Z."/>
            <person name="Marques A.C."/>
            <person name="Graves T."/>
            <person name="Zhou S."/>
            <person name="Teague B."/>
            <person name="Potamousis K."/>
            <person name="Churas C."/>
            <person name="Place M."/>
            <person name="Herschleb J."/>
            <person name="Runnheim R."/>
            <person name="Forrest D."/>
            <person name="Amos-Landgraf J."/>
            <person name="Schwartz D.C."/>
            <person name="Cheng Z."/>
            <person name="Lindblad-Toh K."/>
            <person name="Eichler E.E."/>
            <person name="Ponting C.P."/>
        </authorList>
    </citation>
    <scope>NUCLEOTIDE SEQUENCE [LARGE SCALE GENOMIC DNA]</scope>
    <source>
        <strain>C57BL/6J</strain>
    </source>
</reference>
<reference key="4">
    <citation type="journal article" date="2004" name="Genome Res.">
        <title>The status, quality, and expansion of the NIH full-length cDNA project: the Mammalian Gene Collection (MGC).</title>
        <authorList>
            <consortium name="The MGC Project Team"/>
        </authorList>
    </citation>
    <scope>NUCLEOTIDE SEQUENCE [LARGE SCALE MRNA] (ISOFORM 2)</scope>
    <source>
        <strain>C57BL/6J</strain>
        <tissue>Brain</tissue>
    </source>
</reference>
<reference key="5">
    <citation type="journal article" date="2006" name="Proc. Natl. Acad. Sci. U.S.A.">
        <title>The mediator complex functions as a coactivator for GATA-1 in erythropoiesis via subunit Med1/TRAP220.</title>
        <authorList>
            <person name="Stumpf M."/>
            <person name="Waskow C."/>
            <person name="Kroetschel M."/>
            <person name="van Essen D."/>
            <person name="Rodriguez P."/>
            <person name="Zhang X."/>
            <person name="Guyot B."/>
            <person name="Roeder R.G."/>
            <person name="Borggrefe T."/>
        </authorList>
    </citation>
    <scope>INTERACTION WITH GATA1</scope>
</reference>
<reference key="6">
    <citation type="journal article" date="2007" name="Proc. Natl. Acad. Sci. U.S.A.">
        <authorList>
            <person name="Stumpf M."/>
            <person name="Waskow C."/>
            <person name="Kroetschel M."/>
            <person name="van Essen D."/>
            <person name="Rodriguez P."/>
            <person name="Zhang X."/>
            <person name="Guyot B."/>
            <person name="Roeder R.G."/>
            <person name="Borggrefe T."/>
        </authorList>
    </citation>
    <scope>ERRATUM OF PUBMED:17132730</scope>
</reference>
<reference key="7">
    <citation type="journal article" date="2010" name="Cell">
        <title>A tissue-specific atlas of mouse protein phosphorylation and expression.</title>
        <authorList>
            <person name="Huttlin E.L."/>
            <person name="Jedrychowski M.P."/>
            <person name="Elias J.E."/>
            <person name="Goswami T."/>
            <person name="Rad R."/>
            <person name="Beausoleil S.A."/>
            <person name="Villen J."/>
            <person name="Haas W."/>
            <person name="Sowa M.E."/>
            <person name="Gygi S.P."/>
        </authorList>
    </citation>
    <scope>PHOSPHORYLATION [LARGE SCALE ANALYSIS] AT SER-1117; SER-1124; SER-1133; SER-1141 AND SER-1149</scope>
    <scope>IDENTIFICATION BY MASS SPECTROMETRY [LARGE SCALE ANALYSIS]</scope>
    <source>
        <tissue>Brain</tissue>
        <tissue>Brown adipose tissue</tissue>
        <tissue>Kidney</tissue>
        <tissue>Lung</tissue>
        <tissue>Spleen</tissue>
    </source>
</reference>
<protein>
    <recommendedName>
        <fullName>Mediator of RNA polymerase II transcription subunit 14</fullName>
    </recommendedName>
    <alternativeName>
        <fullName>Cofactor required for Sp1 transcriptional activation subunit 2</fullName>
        <shortName>CRSP complex subunit 2</shortName>
    </alternativeName>
    <alternativeName>
        <fullName>Mediator complex subunit 14</fullName>
    </alternativeName>
    <alternativeName>
        <fullName>Thyroid hormone receptor-associated protein complex 170 kDa component</fullName>
        <shortName>Trap170</shortName>
    </alternativeName>
</protein>
<organism>
    <name type="scientific">Mus musculus</name>
    <name type="common">Mouse</name>
    <dbReference type="NCBI Taxonomy" id="10090"/>
    <lineage>
        <taxon>Eukaryota</taxon>
        <taxon>Metazoa</taxon>
        <taxon>Chordata</taxon>
        <taxon>Craniata</taxon>
        <taxon>Vertebrata</taxon>
        <taxon>Euteleostomi</taxon>
        <taxon>Mammalia</taxon>
        <taxon>Eutheria</taxon>
        <taxon>Euarchontoglires</taxon>
        <taxon>Glires</taxon>
        <taxon>Rodentia</taxon>
        <taxon>Myomorpha</taxon>
        <taxon>Muroidea</taxon>
        <taxon>Muridae</taxon>
        <taxon>Murinae</taxon>
        <taxon>Mus</taxon>
        <taxon>Mus</taxon>
    </lineage>
</organism>
<sequence length="1459" mass="160966">MAPVQLDNHQLIPPGGGGGSSGGGGSSSGSASAPAPPPPAAAVAAAAAAAASPGYRLSTLIEFLLHRAYSELMVLTDLLPRKSDVERKIEIVQFASRTRQLFVRLLALVKWANDAGKVEKCAMISSFLDQQAILFVDTADRLASLARDALVHARLPSFAIPYAIDVLTTGSYPRLPTCIRDKIIPPDPITKIEKQATLHQLNQILRHRLVTTDLPPQLANLTVANGRVKFRVEGEFEATLTVMGDDPEVPWRLLKLEILVEDKETGDGRALVHSMQIDFIHQLVQSRLFADEKPLQDMYNCLHCFCLSLQLEVLHSQTLMLIRERWGDLVQVERYHAGKSLSLSVWNQQVLGRKTGTASVHKVTIKIDENDVSKPLQIFHDPPLPASDSKLVERAMKIDHLSIEKLLIDSVHARAHQRLQELKAILRSFNANESSSIETALPALIVPILEPCGNSECLHIFVDLHSGMFQLMLYGLDPATLEDMEKSLNDDMKRIIPWIQQLKFWLGQQRCKQSIKHLPTITTETLQLANYSTHPIGSLSKNKLFIKLTRLPQYYIVVEMLEVPNKPTQLSYNYYFMSVSTADREDSPVMALLLQQFKDNIQDLMSYTKTGKQTRTGTKHKLSDDPCPIDSKKAKRSGEMCAFNKVLAHFVAMCDTNMPFVGLRLELSNLEIPHQGVQVEGDGFNHAIRLLKIPPCKGISEETQKALDRSLLDCTFRLQGRNNRTWVAELVFANCPLNGTSTREQGPSRHVYLTYENLLSEPVGGRKVVEMFLNDWSSIARLYECVLEFARSLPEIPAHLNIFSEVRVYNYRKLILCYGTTKGSSISIQWNSIHQKFHIALGTVGPNSGCSNCHNTILHQLQEMFNKTPNVVQLLQVLFDTQAPLNAINKLPTVPMLGLTQRTNTAYQCFSILPQSSTHIRLAFRNMYCIDIYCRSRGVVAIRDGAYSLFDNSKLVEGFYPAPGLKTFLNMFVDSNQDARRRSVNEDDNPPSPIGGDMMDSLISQLQPPQQQPFPKQPGTSGAYPLTSPPTSYHSTVNQSPSMMHTQSPGNLHAASSPSGALRAPSPASFVPTPPPSSHGISIGPGASFASPHGTLDPSSPYTMVSPSGRAGNWPGSPQVSGPSPATRLPGMSPANPSLHSPVPDVSHSPRAGTSSQTMPTNMPPPRKLPQRSWAASIPTILTHSALNILLLPSPTPGLVPGLAGSYLCSPLERFLGSVIMRRHLQRIIQQETLQLINSNEPGVIMFKTDALKCRVALSPKTNQTLQLKVTPENAGQWKPDELQVLEKFFETRVAGPPFKANTLIAFTKLLGAPTHILRDCVHIMKLELFPDQATQLKWNVQFCLTIPPSAPPIAPPGTPAVVLKSKMLFFLQLTQKTSVPPQEPVSIIVPIIYDMASGTTQQADIPRQQNSSVAAPMMVSNILKRFAEMNPPRQGECTIFAAVRDLMANLTLPPGGRP</sequence>
<comment type="function">
    <text evidence="1">Component of the Mediator complex, a coactivator involved in the regulated transcription of nearly all RNA polymerase II-dependent genes. Mediator functions as a bridge to convey information from gene-specific regulatory proteins to the basal RNA polymerase II transcription machinery. Mediator is recruited to promoters by direct interactions with regulatory proteins and serves as a scaffold for the assembly of a functional preinitiation complex with RNA polymerase II and the general transcription factors (By similarity).</text>
</comment>
<comment type="subunit">
    <text evidence="1 4">Component of the Mediator complex, which is composed of MED1, MED4, MED6, MED7, MED8, MED9, MED10, MED11, MED12, MED13, MED13L, MED14, MED15, MED16, MED17, MED18, MED19, MED20, MED21, MED22, MED23, MED24, MED25, MED26, MED27, MED29, MED30, MED31, CCNC, CDK8 and CDC2L6/CDK11. The MED12, MED13, CCNC and CDK8 subunits form a distinct module termed the CDK8 module. Mediator containing the CDK8 module is less active than Mediator lacking this module in supporting transcriptional activation. Individual preparations of the Mediator complex lacking one or more distinct subunits have been variously termed ARC, CRSP, DRIP, PC2, SMCC and TRAP. Interacts with AR, ESR1, SREBF1 and STAT2 (By similarity). Interacts with GATA1.</text>
</comment>
<comment type="subcellular location">
    <subcellularLocation>
        <location evidence="8">Nucleus</location>
    </subcellularLocation>
</comment>
<comment type="alternative products">
    <event type="alternative splicing"/>
    <isoform>
        <id>A2ABV5-1</id>
        <name>1</name>
        <sequence type="displayed"/>
    </isoform>
    <isoform>
        <id>A2ABV5-2</id>
        <name>2</name>
        <sequence type="described" ref="VSP_028037 VSP_028038"/>
    </isoform>
    <isoform>
        <id>A2ABV5-3</id>
        <name>3</name>
        <sequence type="described" ref="VSP_028035 VSP_028036"/>
    </isoform>
    <isoform>
        <id>A2ABV5-4</id>
        <name>4</name>
        <sequence type="described" ref="VSP_028033 VSP_028034"/>
    </isoform>
</comment>
<comment type="similarity">
    <text evidence="8">Belongs to the Mediator complex subunit 14 family.</text>
</comment>
<keyword id="KW-0002">3D-structure</keyword>
<keyword id="KW-0010">Activator</keyword>
<keyword id="KW-0025">Alternative splicing</keyword>
<keyword id="KW-0539">Nucleus</keyword>
<keyword id="KW-0597">Phosphoprotein</keyword>
<keyword id="KW-1185">Reference proteome</keyword>
<keyword id="KW-0677">Repeat</keyword>
<keyword id="KW-0804">Transcription</keyword>
<keyword id="KW-0805">Transcription regulation</keyword>
<proteinExistence type="evidence at protein level"/>
<name>MED14_MOUSE</name>
<feature type="chain" id="PRO_0000304585" description="Mediator of RNA polymerase II transcription subunit 14">
    <location>
        <begin position="1"/>
        <end position="1459"/>
    </location>
</feature>
<feature type="region of interest" description="Disordered" evidence="3">
    <location>
        <begin position="1"/>
        <end position="37"/>
    </location>
</feature>
<feature type="region of interest" description="Interaction with STAT2" evidence="1">
    <location>
        <begin position="194"/>
        <end position="572"/>
    </location>
</feature>
<feature type="region of interest" description="Interaction with SREBF1" evidence="1">
    <location>
        <begin position="506"/>
        <end position="830"/>
    </location>
</feature>
<feature type="region of interest" description="Disordered" evidence="3">
    <location>
        <begin position="979"/>
        <end position="1171"/>
    </location>
</feature>
<feature type="short sequence motif" description="LXXLL motif 1">
    <location>
        <begin position="75"/>
        <end position="79"/>
    </location>
</feature>
<feature type="short sequence motif" description="LXXLL motif 2">
    <location>
        <begin position="1187"/>
        <end position="1191"/>
    </location>
</feature>
<feature type="compositionally biased region" description="Gly residues" evidence="3">
    <location>
        <begin position="14"/>
        <end position="27"/>
    </location>
</feature>
<feature type="compositionally biased region" description="Polar residues" evidence="3">
    <location>
        <begin position="1029"/>
        <end position="1059"/>
    </location>
</feature>
<feature type="compositionally biased region" description="Polar residues" evidence="3">
    <location>
        <begin position="1097"/>
        <end position="1106"/>
    </location>
</feature>
<feature type="compositionally biased region" description="Polar residues" evidence="3">
    <location>
        <begin position="1152"/>
        <end position="1161"/>
    </location>
</feature>
<feature type="modified residue" description="Phosphoserine" evidence="2">
    <location>
        <position position="623"/>
    </location>
</feature>
<feature type="modified residue" description="Phosphoserine" evidence="2">
    <location>
        <position position="992"/>
    </location>
</feature>
<feature type="modified residue" description="Phosphoserine" evidence="9">
    <location>
        <position position="1117"/>
    </location>
</feature>
<feature type="modified residue" description="Phosphoserine" evidence="9">
    <location>
        <position position="1124"/>
    </location>
</feature>
<feature type="modified residue" description="Phosphoserine" evidence="9">
    <location>
        <position position="1133"/>
    </location>
</feature>
<feature type="modified residue" description="Phosphoserine" evidence="9">
    <location>
        <position position="1141"/>
    </location>
</feature>
<feature type="modified residue" description="Phosphoserine" evidence="9">
    <location>
        <position position="1149"/>
    </location>
</feature>
<feature type="splice variant" id="VSP_028033" description="In isoform 4." evidence="7">
    <location>
        <begin position="1"/>
        <end position="72"/>
    </location>
</feature>
<feature type="splice variant" id="VSP_028034" description="In isoform 4." evidence="7">
    <location>
        <begin position="435"/>
        <end position="1459"/>
    </location>
</feature>
<feature type="splice variant" id="VSP_028035" description="In isoform 3." evidence="5">
    <original>SIETALPALIVPILEPCGNSECLHIFVDLHSGMFQL</original>
    <variation>KHSRAGEMAQQLRVPTALPKVLSSNPINHMVAHNHL</variation>
    <location>
        <begin position="436"/>
        <end position="471"/>
    </location>
</feature>
<feature type="splice variant" id="VSP_028036" description="In isoform 3." evidence="5">
    <location>
        <begin position="472"/>
        <end position="1459"/>
    </location>
</feature>
<feature type="splice variant" id="VSP_028037" description="In isoform 2." evidence="6">
    <original>PSRHVYLTYENLLSEPVGGRKVVE</original>
    <variation>KIFHTVFLLMSIFLKVLVTISFFL</variation>
    <location>
        <begin position="747"/>
        <end position="770"/>
    </location>
</feature>
<feature type="splice variant" id="VSP_028038" description="In isoform 2." evidence="6">
    <location>
        <begin position="771"/>
        <end position="1459"/>
    </location>
</feature>
<feature type="sequence conflict" description="In Ref. 2; BAE37289." evidence="8" ref="2">
    <original>F</original>
    <variation>C</variation>
    <location>
        <position position="158"/>
    </location>
</feature>
<feature type="sequence conflict" description="In Ref. 1; BAA76611." evidence="8" ref="1">
    <original>WN</original>
    <variation>C</variation>
    <location>
        <begin position="346"/>
        <end position="347"/>
    </location>
</feature>